<sequence length="365" mass="42078">MQNLPVTHYSALLAEKQEKLTALLAPFNAPNLQVFASPTQHFRMRAEFRIWHEGDDFYHIMFDQQSKQRYRVDNFPIASELINRMMTALLPLLKQQTVLHHRLFQIDYLSTQSQHIIVSLLYHKALDEDWQAAAQTLRSQLQQQGFNVQIVGRASKQKICLEQDYVDEILRVHGKDYIYRQVENSFTQPNATVNSKMLEWAVDCTRNSHGDLLELYCGNGNFSIALAQNFRKVLATEIAKPSVAAAQFNIAANQINNLQIIRMSAEEFTQAMQGVREFNRLKGIDLKAYECNTIFVDPPRAGLDADTVKLVQQYERILYISCNPHTLCDNLQTLSQTHRIEKAALFDQFPYTEHMEAGVWLVRKG</sequence>
<dbReference type="EC" id="2.1.1.-" evidence="1"/>
<dbReference type="EC" id="2.1.1.35" evidence="1"/>
<dbReference type="EMBL" id="CP001607">
    <property type="protein sequence ID" value="ACS98205.1"/>
    <property type="molecule type" value="Genomic_DNA"/>
</dbReference>
<dbReference type="RefSeq" id="WP_005701976.1">
    <property type="nucleotide sequence ID" value="NC_012913.1"/>
</dbReference>
<dbReference type="SMR" id="C6AQU6"/>
<dbReference type="KEGG" id="aap:NT05HA_1881"/>
<dbReference type="PATRIC" id="fig|634176.19.peg.1797"/>
<dbReference type="HOGENOM" id="CLU_043022_0_0_6"/>
<dbReference type="GO" id="GO:0005829">
    <property type="term" value="C:cytosol"/>
    <property type="evidence" value="ECO:0007669"/>
    <property type="project" value="TreeGrafter"/>
</dbReference>
<dbReference type="GO" id="GO:0019843">
    <property type="term" value="F:rRNA binding"/>
    <property type="evidence" value="ECO:0007669"/>
    <property type="project" value="TreeGrafter"/>
</dbReference>
<dbReference type="GO" id="GO:0030697">
    <property type="term" value="F:tRNA (uracil(54)-C5)-methyltransferase activity, S-adenosyl methionine-dependent"/>
    <property type="evidence" value="ECO:0007669"/>
    <property type="project" value="UniProtKB-UniRule"/>
</dbReference>
<dbReference type="GO" id="GO:0000049">
    <property type="term" value="F:tRNA binding"/>
    <property type="evidence" value="ECO:0007669"/>
    <property type="project" value="TreeGrafter"/>
</dbReference>
<dbReference type="GO" id="GO:0030488">
    <property type="term" value="P:tRNA methylation"/>
    <property type="evidence" value="ECO:0007669"/>
    <property type="project" value="UniProtKB-UniRule"/>
</dbReference>
<dbReference type="CDD" id="cd02440">
    <property type="entry name" value="AdoMet_MTases"/>
    <property type="match status" value="1"/>
</dbReference>
<dbReference type="FunFam" id="2.40.50.1070:FF:000001">
    <property type="entry name" value="tRNA/tmRNA (uracil-C(5))-methyltransferase"/>
    <property type="match status" value="1"/>
</dbReference>
<dbReference type="FunFam" id="3.40.50.150:FF:000012">
    <property type="entry name" value="tRNA/tmRNA (uracil-C(5))-methyltransferase"/>
    <property type="match status" value="1"/>
</dbReference>
<dbReference type="Gene3D" id="2.40.50.1070">
    <property type="match status" value="1"/>
</dbReference>
<dbReference type="Gene3D" id="3.40.50.150">
    <property type="entry name" value="Vaccinia Virus protein VP39"/>
    <property type="match status" value="1"/>
</dbReference>
<dbReference type="HAMAP" id="MF_01011">
    <property type="entry name" value="RNA_methyltr_TrmA"/>
    <property type="match status" value="1"/>
</dbReference>
<dbReference type="InterPro" id="IPR030390">
    <property type="entry name" value="MeTrfase_TrmA_AS"/>
</dbReference>
<dbReference type="InterPro" id="IPR030391">
    <property type="entry name" value="MeTrfase_TrmA_CS"/>
</dbReference>
<dbReference type="InterPro" id="IPR029063">
    <property type="entry name" value="SAM-dependent_MTases_sf"/>
</dbReference>
<dbReference type="InterPro" id="IPR011869">
    <property type="entry name" value="TrmA_MeTrfase"/>
</dbReference>
<dbReference type="InterPro" id="IPR010280">
    <property type="entry name" value="U5_MeTrfase_fam"/>
</dbReference>
<dbReference type="NCBIfam" id="TIGR02143">
    <property type="entry name" value="trmA_only"/>
    <property type="match status" value="1"/>
</dbReference>
<dbReference type="PANTHER" id="PTHR47790">
    <property type="entry name" value="TRNA/TMRNA (URACIL-C(5))-METHYLTRANSFERASE"/>
    <property type="match status" value="1"/>
</dbReference>
<dbReference type="PANTHER" id="PTHR47790:SF2">
    <property type="entry name" value="TRNA_TMRNA (URACIL-C(5))-METHYLTRANSFERASE"/>
    <property type="match status" value="1"/>
</dbReference>
<dbReference type="Pfam" id="PF05958">
    <property type="entry name" value="tRNA_U5-meth_tr"/>
    <property type="match status" value="1"/>
</dbReference>
<dbReference type="SUPFAM" id="SSF53335">
    <property type="entry name" value="S-adenosyl-L-methionine-dependent methyltransferases"/>
    <property type="match status" value="1"/>
</dbReference>
<dbReference type="PROSITE" id="PS51687">
    <property type="entry name" value="SAM_MT_RNA_M5U"/>
    <property type="match status" value="1"/>
</dbReference>
<dbReference type="PROSITE" id="PS01230">
    <property type="entry name" value="TRMA_1"/>
    <property type="match status" value="1"/>
</dbReference>
<dbReference type="PROSITE" id="PS01231">
    <property type="entry name" value="TRMA_2"/>
    <property type="match status" value="1"/>
</dbReference>
<gene>
    <name evidence="1" type="primary">trmA</name>
    <name type="ordered locus">NT05HA_1881</name>
</gene>
<proteinExistence type="inferred from homology"/>
<accession>C6AQU6</accession>
<organism>
    <name type="scientific">Aggregatibacter aphrophilus (strain NJ8700)</name>
    <name type="common">Haemophilus aphrophilus</name>
    <dbReference type="NCBI Taxonomy" id="634176"/>
    <lineage>
        <taxon>Bacteria</taxon>
        <taxon>Pseudomonadati</taxon>
        <taxon>Pseudomonadota</taxon>
        <taxon>Gammaproteobacteria</taxon>
        <taxon>Pasteurellales</taxon>
        <taxon>Pasteurellaceae</taxon>
        <taxon>Aggregatibacter</taxon>
    </lineage>
</organism>
<protein>
    <recommendedName>
        <fullName evidence="1">tRNA/tmRNA (uracil-C(5))-methyltransferase</fullName>
        <ecNumber evidence="1">2.1.1.-</ecNumber>
        <ecNumber evidence="1">2.1.1.35</ecNumber>
    </recommendedName>
    <alternativeName>
        <fullName evidence="1">tRNA (uracil(54)-C(5))-methyltransferase</fullName>
    </alternativeName>
    <alternativeName>
        <fullName evidence="1">tRNA(m5U54)-methyltransferase</fullName>
        <shortName evidence="1">RUMT</shortName>
    </alternativeName>
    <alternativeName>
        <fullName evidence="1">tmRNA (uracil(341)-C(5))-methyltransferase</fullName>
    </alternativeName>
</protein>
<reference key="1">
    <citation type="journal article" date="2009" name="J. Bacteriol.">
        <title>Complete genome sequence of Aggregatibacter (Haemophilus) aphrophilus NJ8700.</title>
        <authorList>
            <person name="Di Bonaventura M.P."/>
            <person name="DeSalle R."/>
            <person name="Pop M."/>
            <person name="Nagarajan N."/>
            <person name="Figurski D.H."/>
            <person name="Fine D.H."/>
            <person name="Kaplan J.B."/>
            <person name="Planet P.J."/>
        </authorList>
    </citation>
    <scope>NUCLEOTIDE SEQUENCE [LARGE SCALE GENOMIC DNA]</scope>
    <source>
        <strain>NJ8700</strain>
    </source>
</reference>
<comment type="function">
    <text evidence="1">Dual-specificity methyltransferase that catalyzes the formation of 5-methyluridine at position 54 (m5U54) in all tRNAs, and that of position 341 (m5U341) in tmRNA (transfer-mRNA).</text>
</comment>
<comment type="catalytic activity">
    <reaction evidence="1">
        <text>uridine(54) in tRNA + S-adenosyl-L-methionine = 5-methyluridine(54) in tRNA + S-adenosyl-L-homocysteine + H(+)</text>
        <dbReference type="Rhea" id="RHEA:42712"/>
        <dbReference type="Rhea" id="RHEA-COMP:10167"/>
        <dbReference type="Rhea" id="RHEA-COMP:10193"/>
        <dbReference type="ChEBI" id="CHEBI:15378"/>
        <dbReference type="ChEBI" id="CHEBI:57856"/>
        <dbReference type="ChEBI" id="CHEBI:59789"/>
        <dbReference type="ChEBI" id="CHEBI:65315"/>
        <dbReference type="ChEBI" id="CHEBI:74447"/>
        <dbReference type="EC" id="2.1.1.35"/>
    </reaction>
</comment>
<comment type="catalytic activity">
    <reaction evidence="1">
        <text>uridine(341) in tmRNA + S-adenosyl-L-methionine = 5-methyluridine(341) in tmRNA + S-adenosyl-L-homocysteine + H(+)</text>
        <dbReference type="Rhea" id="RHEA:43612"/>
        <dbReference type="Rhea" id="RHEA-COMP:10630"/>
        <dbReference type="Rhea" id="RHEA-COMP:10631"/>
        <dbReference type="ChEBI" id="CHEBI:15378"/>
        <dbReference type="ChEBI" id="CHEBI:57856"/>
        <dbReference type="ChEBI" id="CHEBI:59789"/>
        <dbReference type="ChEBI" id="CHEBI:65315"/>
        <dbReference type="ChEBI" id="CHEBI:74447"/>
    </reaction>
</comment>
<comment type="similarity">
    <text evidence="1">Belongs to the class I-like SAM-binding methyltransferase superfamily. RNA M5U methyltransferase family. TrmA subfamily.</text>
</comment>
<evidence type="ECO:0000255" key="1">
    <source>
        <dbReference type="HAMAP-Rule" id="MF_01011"/>
    </source>
</evidence>
<keyword id="KW-0489">Methyltransferase</keyword>
<keyword id="KW-0949">S-adenosyl-L-methionine</keyword>
<keyword id="KW-0808">Transferase</keyword>
<keyword id="KW-0819">tRNA processing</keyword>
<feature type="chain" id="PRO_0000388545" description="tRNA/tmRNA (uracil-C(5))-methyltransferase">
    <location>
        <begin position="1"/>
        <end position="365"/>
    </location>
</feature>
<feature type="active site" description="Nucleophile" evidence="1">
    <location>
        <position position="322"/>
    </location>
</feature>
<feature type="active site" description="Proton acceptor" evidence="1">
    <location>
        <position position="356"/>
    </location>
</feature>
<feature type="binding site" evidence="1">
    <location>
        <position position="188"/>
    </location>
    <ligand>
        <name>S-adenosyl-L-methionine</name>
        <dbReference type="ChEBI" id="CHEBI:59789"/>
    </ligand>
</feature>
<feature type="binding site" evidence="1">
    <location>
        <position position="216"/>
    </location>
    <ligand>
        <name>S-adenosyl-L-methionine</name>
        <dbReference type="ChEBI" id="CHEBI:59789"/>
    </ligand>
</feature>
<feature type="binding site" evidence="1">
    <location>
        <position position="221"/>
    </location>
    <ligand>
        <name>S-adenosyl-L-methionine</name>
        <dbReference type="ChEBI" id="CHEBI:59789"/>
    </ligand>
</feature>
<feature type="binding site" evidence="1">
    <location>
        <position position="237"/>
    </location>
    <ligand>
        <name>S-adenosyl-L-methionine</name>
        <dbReference type="ChEBI" id="CHEBI:59789"/>
    </ligand>
</feature>
<feature type="binding site" evidence="1">
    <location>
        <position position="297"/>
    </location>
    <ligand>
        <name>S-adenosyl-L-methionine</name>
        <dbReference type="ChEBI" id="CHEBI:59789"/>
    </ligand>
</feature>
<name>TRMA_AGGAN</name>